<proteinExistence type="inferred from homology"/>
<keyword id="KW-0028">Amino-acid biosynthesis</keyword>
<keyword id="KW-0055">Arginine biosynthesis</keyword>
<keyword id="KW-0067">ATP-binding</keyword>
<keyword id="KW-0963">Cytoplasm</keyword>
<keyword id="KW-0418">Kinase</keyword>
<keyword id="KW-0547">Nucleotide-binding</keyword>
<keyword id="KW-1185">Reference proteome</keyword>
<keyword id="KW-0808">Transferase</keyword>
<gene>
    <name evidence="1" type="primary">argB</name>
    <name type="ordered locus">Tlet_0367</name>
</gene>
<feature type="chain" id="PRO_1000057542" description="Acetylglutamate kinase">
    <location>
        <begin position="1"/>
        <end position="279"/>
    </location>
</feature>
<feature type="binding site" evidence="1">
    <location>
        <begin position="62"/>
        <end position="63"/>
    </location>
    <ligand>
        <name>substrate</name>
    </ligand>
</feature>
<feature type="binding site" evidence="1">
    <location>
        <position position="84"/>
    </location>
    <ligand>
        <name>substrate</name>
    </ligand>
</feature>
<feature type="binding site" evidence="1">
    <location>
        <position position="177"/>
    </location>
    <ligand>
        <name>substrate</name>
    </ligand>
</feature>
<feature type="site" description="Transition state stabilizer" evidence="1">
    <location>
        <position position="27"/>
    </location>
</feature>
<feature type="site" description="Transition state stabilizer" evidence="1">
    <location>
        <position position="236"/>
    </location>
</feature>
<name>ARGB_PSELT</name>
<comment type="function">
    <text evidence="1">Catalyzes the ATP-dependent phosphorylation of N-acetyl-L-glutamate.</text>
</comment>
<comment type="catalytic activity">
    <reaction evidence="1">
        <text>N-acetyl-L-glutamate + ATP = N-acetyl-L-glutamyl 5-phosphate + ADP</text>
        <dbReference type="Rhea" id="RHEA:14629"/>
        <dbReference type="ChEBI" id="CHEBI:30616"/>
        <dbReference type="ChEBI" id="CHEBI:44337"/>
        <dbReference type="ChEBI" id="CHEBI:57936"/>
        <dbReference type="ChEBI" id="CHEBI:456216"/>
        <dbReference type="EC" id="2.7.2.8"/>
    </reaction>
</comment>
<comment type="pathway">
    <text evidence="1">Amino-acid biosynthesis; L-arginine biosynthesis; N(2)-acetyl-L-ornithine from L-glutamate: step 2/4.</text>
</comment>
<comment type="subcellular location">
    <subcellularLocation>
        <location evidence="1">Cytoplasm</location>
    </subcellularLocation>
</comment>
<comment type="similarity">
    <text evidence="1">Belongs to the acetylglutamate kinase family. ArgB subfamily.</text>
</comment>
<accession>A8F450</accession>
<organism>
    <name type="scientific">Pseudothermotoga lettingae (strain ATCC BAA-301 / DSM 14385 / NBRC 107922 / TMO)</name>
    <name type="common">Thermotoga lettingae</name>
    <dbReference type="NCBI Taxonomy" id="416591"/>
    <lineage>
        <taxon>Bacteria</taxon>
        <taxon>Thermotogati</taxon>
        <taxon>Thermotogota</taxon>
        <taxon>Thermotogae</taxon>
        <taxon>Thermotogales</taxon>
        <taxon>Thermotogaceae</taxon>
        <taxon>Pseudothermotoga</taxon>
    </lineage>
</organism>
<sequence length="279" mass="30508">MTSENMAILFEVLQYMKEFREKTFVVKVGGAALEKEEAKTSFAKSIVFLRHVQVNPIIVHGGGVEITRLMNQLGIKPLFKNGYRVTDEKTLQIAEMVLEKINKDIVLKINLHGGRAIGVSGKDDNLLLCEKDIANGDIGYVGKIRKVNSGFIEKLIAQNYIPVICPVGFGEDGTTYNINADVAAAEIAISLKAEKLIFVSDVPGVMKDGELIPYLDVRNARKLIEEGVVKGGMIPKIQCAVNALKAGIKSVHVVNGEIPHALLTEIFTLHGIGTMLREI</sequence>
<dbReference type="EC" id="2.7.2.8" evidence="1"/>
<dbReference type="EMBL" id="CP000812">
    <property type="protein sequence ID" value="ABV32934.1"/>
    <property type="molecule type" value="Genomic_DNA"/>
</dbReference>
<dbReference type="RefSeq" id="WP_012002415.1">
    <property type="nucleotide sequence ID" value="NZ_BSDV01000001.1"/>
</dbReference>
<dbReference type="SMR" id="A8F450"/>
<dbReference type="STRING" id="416591.Tlet_0367"/>
<dbReference type="KEGG" id="tle:Tlet_0367"/>
<dbReference type="eggNOG" id="COG0548">
    <property type="taxonomic scope" value="Bacteria"/>
</dbReference>
<dbReference type="HOGENOM" id="CLU_053680_0_1_0"/>
<dbReference type="OrthoDB" id="9803155at2"/>
<dbReference type="UniPathway" id="UPA00068">
    <property type="reaction ID" value="UER00107"/>
</dbReference>
<dbReference type="Proteomes" id="UP000002016">
    <property type="component" value="Chromosome"/>
</dbReference>
<dbReference type="GO" id="GO:0005737">
    <property type="term" value="C:cytoplasm"/>
    <property type="evidence" value="ECO:0007669"/>
    <property type="project" value="UniProtKB-SubCell"/>
</dbReference>
<dbReference type="GO" id="GO:0003991">
    <property type="term" value="F:acetylglutamate kinase activity"/>
    <property type="evidence" value="ECO:0007669"/>
    <property type="project" value="UniProtKB-UniRule"/>
</dbReference>
<dbReference type="GO" id="GO:0005524">
    <property type="term" value="F:ATP binding"/>
    <property type="evidence" value="ECO:0007669"/>
    <property type="project" value="UniProtKB-UniRule"/>
</dbReference>
<dbReference type="GO" id="GO:0042450">
    <property type="term" value="P:arginine biosynthetic process via ornithine"/>
    <property type="evidence" value="ECO:0007669"/>
    <property type="project" value="UniProtKB-UniRule"/>
</dbReference>
<dbReference type="GO" id="GO:0006526">
    <property type="term" value="P:L-arginine biosynthetic process"/>
    <property type="evidence" value="ECO:0007669"/>
    <property type="project" value="UniProtKB-UniPathway"/>
</dbReference>
<dbReference type="CDD" id="cd04250">
    <property type="entry name" value="AAK_NAGK-C"/>
    <property type="match status" value="1"/>
</dbReference>
<dbReference type="FunFam" id="3.40.1160.10:FF:000004">
    <property type="entry name" value="Acetylglutamate kinase"/>
    <property type="match status" value="1"/>
</dbReference>
<dbReference type="Gene3D" id="3.40.1160.10">
    <property type="entry name" value="Acetylglutamate kinase-like"/>
    <property type="match status" value="1"/>
</dbReference>
<dbReference type="HAMAP" id="MF_00082">
    <property type="entry name" value="ArgB"/>
    <property type="match status" value="1"/>
</dbReference>
<dbReference type="InterPro" id="IPR036393">
    <property type="entry name" value="AceGlu_kinase-like_sf"/>
</dbReference>
<dbReference type="InterPro" id="IPR004662">
    <property type="entry name" value="AcgluKinase_fam"/>
</dbReference>
<dbReference type="InterPro" id="IPR037528">
    <property type="entry name" value="ArgB"/>
</dbReference>
<dbReference type="InterPro" id="IPR001048">
    <property type="entry name" value="Asp/Glu/Uridylate_kinase"/>
</dbReference>
<dbReference type="InterPro" id="IPR041727">
    <property type="entry name" value="NAGK-C"/>
</dbReference>
<dbReference type="NCBIfam" id="TIGR00761">
    <property type="entry name" value="argB"/>
    <property type="match status" value="1"/>
</dbReference>
<dbReference type="PANTHER" id="PTHR23342">
    <property type="entry name" value="N-ACETYLGLUTAMATE SYNTHASE"/>
    <property type="match status" value="1"/>
</dbReference>
<dbReference type="PANTHER" id="PTHR23342:SF0">
    <property type="entry name" value="N-ACETYLGLUTAMATE SYNTHASE, MITOCHONDRIAL"/>
    <property type="match status" value="1"/>
</dbReference>
<dbReference type="Pfam" id="PF00696">
    <property type="entry name" value="AA_kinase"/>
    <property type="match status" value="1"/>
</dbReference>
<dbReference type="PIRSF" id="PIRSF000728">
    <property type="entry name" value="NAGK"/>
    <property type="match status" value="1"/>
</dbReference>
<dbReference type="SUPFAM" id="SSF53633">
    <property type="entry name" value="Carbamate kinase-like"/>
    <property type="match status" value="1"/>
</dbReference>
<evidence type="ECO:0000255" key="1">
    <source>
        <dbReference type="HAMAP-Rule" id="MF_00082"/>
    </source>
</evidence>
<protein>
    <recommendedName>
        <fullName evidence="1">Acetylglutamate kinase</fullName>
        <ecNumber evidence="1">2.7.2.8</ecNumber>
    </recommendedName>
    <alternativeName>
        <fullName evidence="1">N-acetyl-L-glutamate 5-phosphotransferase</fullName>
    </alternativeName>
    <alternativeName>
        <fullName evidence="1">NAG kinase</fullName>
        <shortName evidence="1">NAGK</shortName>
    </alternativeName>
</protein>
<reference key="1">
    <citation type="submission" date="2007-08" db="EMBL/GenBank/DDBJ databases">
        <title>Complete sequence of Thermotoga lettingae TMO.</title>
        <authorList>
            <consortium name="US DOE Joint Genome Institute"/>
            <person name="Copeland A."/>
            <person name="Lucas S."/>
            <person name="Lapidus A."/>
            <person name="Barry K."/>
            <person name="Glavina del Rio T."/>
            <person name="Dalin E."/>
            <person name="Tice H."/>
            <person name="Pitluck S."/>
            <person name="Foster B."/>
            <person name="Bruce D."/>
            <person name="Schmutz J."/>
            <person name="Larimer F."/>
            <person name="Land M."/>
            <person name="Hauser L."/>
            <person name="Kyrpides N."/>
            <person name="Mikhailova N."/>
            <person name="Nelson K."/>
            <person name="Gogarten J.P."/>
            <person name="Noll K."/>
            <person name="Richardson P."/>
        </authorList>
    </citation>
    <scope>NUCLEOTIDE SEQUENCE [LARGE SCALE GENOMIC DNA]</scope>
    <source>
        <strain>ATCC BAA-301 / DSM 14385 / NBRC 107922 / TMO</strain>
    </source>
</reference>